<feature type="initiator methionine" description="Removed" evidence="2">
    <location>
        <position position="1"/>
    </location>
</feature>
<feature type="chain" id="PRO_0000164118" description="Superoxide dismutase [Cu-Zn] 1">
    <location>
        <begin position="2"/>
        <end position="154"/>
    </location>
</feature>
<feature type="binding site" evidence="2">
    <location>
        <position position="47"/>
    </location>
    <ligand>
        <name>Cu cation</name>
        <dbReference type="ChEBI" id="CHEBI:23378"/>
        <note>catalytic</note>
    </ligand>
</feature>
<feature type="binding site" evidence="2">
    <location>
        <position position="49"/>
    </location>
    <ligand>
        <name>Cu cation</name>
        <dbReference type="ChEBI" id="CHEBI:23378"/>
        <note>catalytic</note>
    </ligand>
</feature>
<feature type="binding site" evidence="2">
    <location>
        <position position="64"/>
    </location>
    <ligand>
        <name>Cu cation</name>
        <dbReference type="ChEBI" id="CHEBI:23378"/>
        <note>catalytic</note>
    </ligand>
</feature>
<feature type="binding site" evidence="2">
    <location>
        <position position="64"/>
    </location>
    <ligand>
        <name>Zn(2+)</name>
        <dbReference type="ChEBI" id="CHEBI:29105"/>
        <note>structural</note>
    </ligand>
</feature>
<feature type="binding site" evidence="2">
    <location>
        <position position="72"/>
    </location>
    <ligand>
        <name>Zn(2+)</name>
        <dbReference type="ChEBI" id="CHEBI:29105"/>
        <note>structural</note>
    </ligand>
</feature>
<feature type="binding site" evidence="2">
    <location>
        <position position="81"/>
    </location>
    <ligand>
        <name>Zn(2+)</name>
        <dbReference type="ChEBI" id="CHEBI:29105"/>
        <note>structural</note>
    </ligand>
</feature>
<feature type="binding site" evidence="2">
    <location>
        <position position="84"/>
    </location>
    <ligand>
        <name>Zn(2+)</name>
        <dbReference type="ChEBI" id="CHEBI:29105"/>
        <note>structural</note>
    </ligand>
</feature>
<feature type="binding site" evidence="2">
    <location>
        <position position="121"/>
    </location>
    <ligand>
        <name>Cu cation</name>
        <dbReference type="ChEBI" id="CHEBI:23378"/>
        <note>catalytic</note>
    </ligand>
</feature>
<feature type="binding site" evidence="2">
    <location>
        <position position="144"/>
    </location>
    <ligand>
        <name>substrate</name>
    </ligand>
</feature>
<feature type="disulfide bond" evidence="2">
    <location>
        <begin position="58"/>
        <end position="147"/>
    </location>
</feature>
<feature type="sequence conflict" description="In Ref. 1; AAC50010." evidence="4" ref="1">
    <original>AK</original>
    <variation>VQ</variation>
    <location>
        <begin position="2"/>
        <end position="3"/>
    </location>
</feature>
<feature type="sequence conflict" description="In Ref. 1; AAC50010." evidence="4" ref="1">
    <original>P</original>
    <variation>L</variation>
    <location>
        <position position="145"/>
    </location>
</feature>
<feature type="sequence conflict" description="In Ref. 1; AAC50010." evidence="4" ref="1">
    <original>SE</original>
    <variation>TN</variation>
    <location>
        <begin position="153"/>
        <end position="154"/>
    </location>
</feature>
<protein>
    <recommendedName>
        <fullName>Superoxide dismutase [Cu-Zn] 1</fullName>
        <ecNumber evidence="3">1.15.1.1</ecNumber>
    </recommendedName>
</protein>
<proteinExistence type="evidence at protein level"/>
<dbReference type="EC" id="1.15.1.1" evidence="3"/>
<dbReference type="EMBL" id="AF016383">
    <property type="protein sequence ID" value="AAC50010.1"/>
    <property type="molecule type" value="mRNA"/>
</dbReference>
<dbReference type="EMBL" id="CR382139">
    <property type="protein sequence ID" value="CAG90816.1"/>
    <property type="molecule type" value="Genomic_DNA"/>
</dbReference>
<dbReference type="RefSeq" id="XP_462310.1">
    <property type="nucleotide sequence ID" value="XM_462310.1"/>
</dbReference>
<dbReference type="SMR" id="O42724"/>
<dbReference type="FunCoup" id="O42724">
    <property type="interactions" value="855"/>
</dbReference>
<dbReference type="STRING" id="284592.O42724"/>
<dbReference type="GeneID" id="2905248"/>
<dbReference type="KEGG" id="dha:DEHA2G17732g"/>
<dbReference type="VEuPathDB" id="FungiDB:DEHA2G17732g"/>
<dbReference type="eggNOG" id="KOG0441">
    <property type="taxonomic scope" value="Eukaryota"/>
</dbReference>
<dbReference type="HOGENOM" id="CLU_056632_4_1_1"/>
<dbReference type="InParanoid" id="O42724"/>
<dbReference type="OMA" id="AQRGFHI"/>
<dbReference type="OrthoDB" id="2015551at2759"/>
<dbReference type="Proteomes" id="UP000000599">
    <property type="component" value="Chromosome G"/>
</dbReference>
<dbReference type="GO" id="GO:0005829">
    <property type="term" value="C:cytosol"/>
    <property type="evidence" value="ECO:0007669"/>
    <property type="project" value="EnsemblFungi"/>
</dbReference>
<dbReference type="GO" id="GO:0005758">
    <property type="term" value="C:mitochondrial intermembrane space"/>
    <property type="evidence" value="ECO:0007669"/>
    <property type="project" value="EnsemblFungi"/>
</dbReference>
<dbReference type="GO" id="GO:0005634">
    <property type="term" value="C:nucleus"/>
    <property type="evidence" value="ECO:0007669"/>
    <property type="project" value="EnsemblFungi"/>
</dbReference>
<dbReference type="GO" id="GO:1902693">
    <property type="term" value="C:superoxide dismutase complex"/>
    <property type="evidence" value="ECO:0007669"/>
    <property type="project" value="EnsemblFungi"/>
</dbReference>
<dbReference type="GO" id="GO:0005507">
    <property type="term" value="F:copper ion binding"/>
    <property type="evidence" value="ECO:0007669"/>
    <property type="project" value="InterPro"/>
</dbReference>
<dbReference type="GO" id="GO:0016670">
    <property type="term" value="F:oxidoreductase activity, acting on a sulfur group of donors, oxygen as acceptor"/>
    <property type="evidence" value="ECO:0007669"/>
    <property type="project" value="EnsemblFungi"/>
</dbReference>
<dbReference type="GO" id="GO:0004784">
    <property type="term" value="F:superoxide dismutase activity"/>
    <property type="evidence" value="ECO:0007669"/>
    <property type="project" value="UniProtKB-EC"/>
</dbReference>
<dbReference type="GO" id="GO:0045454">
    <property type="term" value="P:cell redox homeostasis"/>
    <property type="evidence" value="ECO:0007669"/>
    <property type="project" value="EnsemblFungi"/>
</dbReference>
<dbReference type="GO" id="GO:0006825">
    <property type="term" value="P:copper ion transport"/>
    <property type="evidence" value="ECO:0007669"/>
    <property type="project" value="EnsemblFungi"/>
</dbReference>
<dbReference type="GO" id="GO:0031505">
    <property type="term" value="P:fungal-type cell wall organization"/>
    <property type="evidence" value="ECO:0007669"/>
    <property type="project" value="EnsemblFungi"/>
</dbReference>
<dbReference type="GO" id="GO:0006878">
    <property type="term" value="P:intracellular copper ion homeostasis"/>
    <property type="evidence" value="ECO:0007669"/>
    <property type="project" value="EnsemblFungi"/>
</dbReference>
<dbReference type="GO" id="GO:0006882">
    <property type="term" value="P:intracellular zinc ion homeostasis"/>
    <property type="evidence" value="ECO:0007669"/>
    <property type="project" value="EnsemblFungi"/>
</dbReference>
<dbReference type="GO" id="GO:1901856">
    <property type="term" value="P:negative regulation of cellular respiration"/>
    <property type="evidence" value="ECO:0007669"/>
    <property type="project" value="EnsemblFungi"/>
</dbReference>
<dbReference type="GO" id="GO:0045944">
    <property type="term" value="P:positive regulation of transcription by RNA polymerase II"/>
    <property type="evidence" value="ECO:0007669"/>
    <property type="project" value="EnsemblFungi"/>
</dbReference>
<dbReference type="GO" id="GO:0050821">
    <property type="term" value="P:protein stabilization"/>
    <property type="evidence" value="ECO:0007669"/>
    <property type="project" value="EnsemblFungi"/>
</dbReference>
<dbReference type="CDD" id="cd00305">
    <property type="entry name" value="Cu-Zn_Superoxide_Dismutase"/>
    <property type="match status" value="1"/>
</dbReference>
<dbReference type="FunFam" id="2.60.40.200:FF:000001">
    <property type="entry name" value="Superoxide dismutase [Cu-Zn]"/>
    <property type="match status" value="1"/>
</dbReference>
<dbReference type="Gene3D" id="2.60.40.200">
    <property type="entry name" value="Superoxide dismutase, copper/zinc binding domain"/>
    <property type="match status" value="1"/>
</dbReference>
<dbReference type="InterPro" id="IPR036423">
    <property type="entry name" value="SOD-like_Cu/Zn_dom_sf"/>
</dbReference>
<dbReference type="InterPro" id="IPR024134">
    <property type="entry name" value="SOD_Cu/Zn_/chaperone"/>
</dbReference>
<dbReference type="InterPro" id="IPR018152">
    <property type="entry name" value="SOD_Cu/Zn_BS"/>
</dbReference>
<dbReference type="InterPro" id="IPR001424">
    <property type="entry name" value="SOD_Cu_Zn_dom"/>
</dbReference>
<dbReference type="PANTHER" id="PTHR10003">
    <property type="entry name" value="SUPEROXIDE DISMUTASE CU-ZN -RELATED"/>
    <property type="match status" value="1"/>
</dbReference>
<dbReference type="Pfam" id="PF00080">
    <property type="entry name" value="Sod_Cu"/>
    <property type="match status" value="1"/>
</dbReference>
<dbReference type="PRINTS" id="PR00068">
    <property type="entry name" value="CUZNDISMTASE"/>
</dbReference>
<dbReference type="SUPFAM" id="SSF49329">
    <property type="entry name" value="Cu,Zn superoxide dismutase-like"/>
    <property type="match status" value="1"/>
</dbReference>
<dbReference type="PROSITE" id="PS00087">
    <property type="entry name" value="SOD_CU_ZN_1"/>
    <property type="match status" value="1"/>
</dbReference>
<dbReference type="PROSITE" id="PS00332">
    <property type="entry name" value="SOD_CU_ZN_2"/>
    <property type="match status" value="1"/>
</dbReference>
<comment type="function">
    <text evidence="1">Destroys radicals which are normally produced within the cells and which are toxic to biological systems.</text>
</comment>
<comment type="catalytic activity">
    <reaction evidence="3">
        <text>2 superoxide + 2 H(+) = H2O2 + O2</text>
        <dbReference type="Rhea" id="RHEA:20696"/>
        <dbReference type="ChEBI" id="CHEBI:15378"/>
        <dbReference type="ChEBI" id="CHEBI:15379"/>
        <dbReference type="ChEBI" id="CHEBI:16240"/>
        <dbReference type="ChEBI" id="CHEBI:18421"/>
        <dbReference type="EC" id="1.15.1.1"/>
    </reaction>
</comment>
<comment type="cofactor">
    <cofactor evidence="2">
        <name>Cu cation</name>
        <dbReference type="ChEBI" id="CHEBI:23378"/>
    </cofactor>
    <text evidence="2">Binds 1 copper ion per subunit.</text>
</comment>
<comment type="cofactor">
    <cofactor evidence="2">
        <name>Zn(2+)</name>
        <dbReference type="ChEBI" id="CHEBI:29105"/>
    </cofactor>
    <text evidence="2">Binds 1 zinc ion per subunit.</text>
</comment>
<comment type="subunit">
    <text evidence="3">Homodimer.</text>
</comment>
<comment type="subcellular location">
    <subcellularLocation>
        <location evidence="2">Cytoplasm</location>
    </subcellularLocation>
</comment>
<comment type="similarity">
    <text evidence="4">Belongs to the Cu-Zn superoxide dismutase family.</text>
</comment>
<sequence>MAKAVAVLRGDSKVSGVVNFEQSSESDPTTITWEISGNDANALRGFHVHTFGDNTNGCTSAGPHFNPFTKEHGAPEDDNRHVGDLGNVTTDTSGVAKGSKQDLFVKLIGQNSILGRTVVIHAGTDDLGKGGNAESKKTGNAGARPACGVIGLSE</sequence>
<reference key="1">
    <citation type="journal article" date="1998" name="Yeast">
        <title>Cloning and sequencing of a cDNA encoding a copper-zinc superoxide dismutase enzyme from the marine yeast Debaryomyces hansenii.</title>
        <authorList>
            <person name="Hernandez-Saavedra N.Y."/>
            <person name="Egly J.-M."/>
            <person name="Ochoa J.L."/>
        </authorList>
    </citation>
    <scope>NUCLEOTIDE SEQUENCE [MRNA]</scope>
    <scope>PROTEIN SEQUENCE OF 14-29</scope>
    <source>
        <strain>CIBNOR C-11</strain>
    </source>
</reference>
<reference key="2">
    <citation type="journal article" date="2004" name="Nature">
        <title>Genome evolution in yeasts.</title>
        <authorList>
            <person name="Dujon B."/>
            <person name="Sherman D."/>
            <person name="Fischer G."/>
            <person name="Durrens P."/>
            <person name="Casaregola S."/>
            <person name="Lafontaine I."/>
            <person name="de Montigny J."/>
            <person name="Marck C."/>
            <person name="Neuveglise C."/>
            <person name="Talla E."/>
            <person name="Goffard N."/>
            <person name="Frangeul L."/>
            <person name="Aigle M."/>
            <person name="Anthouard V."/>
            <person name="Babour A."/>
            <person name="Barbe V."/>
            <person name="Barnay S."/>
            <person name="Blanchin S."/>
            <person name="Beckerich J.-M."/>
            <person name="Beyne E."/>
            <person name="Bleykasten C."/>
            <person name="Boisrame A."/>
            <person name="Boyer J."/>
            <person name="Cattolico L."/>
            <person name="Confanioleri F."/>
            <person name="de Daruvar A."/>
            <person name="Despons L."/>
            <person name="Fabre E."/>
            <person name="Fairhead C."/>
            <person name="Ferry-Dumazet H."/>
            <person name="Groppi A."/>
            <person name="Hantraye F."/>
            <person name="Hennequin C."/>
            <person name="Jauniaux N."/>
            <person name="Joyet P."/>
            <person name="Kachouri R."/>
            <person name="Kerrest A."/>
            <person name="Koszul R."/>
            <person name="Lemaire M."/>
            <person name="Lesur I."/>
            <person name="Ma L."/>
            <person name="Muller H."/>
            <person name="Nicaud J.-M."/>
            <person name="Nikolski M."/>
            <person name="Oztas S."/>
            <person name="Ozier-Kalogeropoulos O."/>
            <person name="Pellenz S."/>
            <person name="Potier S."/>
            <person name="Richard G.-F."/>
            <person name="Straub M.-L."/>
            <person name="Suleau A."/>
            <person name="Swennen D."/>
            <person name="Tekaia F."/>
            <person name="Wesolowski-Louvel M."/>
            <person name="Westhof E."/>
            <person name="Wirth B."/>
            <person name="Zeniou-Meyer M."/>
            <person name="Zivanovic Y."/>
            <person name="Bolotin-Fukuhara M."/>
            <person name="Thierry A."/>
            <person name="Bouchier C."/>
            <person name="Caudron B."/>
            <person name="Scarpelli C."/>
            <person name="Gaillardin C."/>
            <person name="Weissenbach J."/>
            <person name="Wincker P."/>
            <person name="Souciet J.-L."/>
        </authorList>
    </citation>
    <scope>NUCLEOTIDE SEQUENCE [LARGE SCALE GENOMIC DNA]</scope>
    <source>
        <strain>ATCC 36239 / CBS 767 / BCRC 21394 / JCM 1990 / NBRC 0083 / IGC 2968</strain>
    </source>
</reference>
<evidence type="ECO:0000250" key="1">
    <source>
        <dbReference type="UniProtKB" id="P00442"/>
    </source>
</evidence>
<evidence type="ECO:0000250" key="2">
    <source>
        <dbReference type="UniProtKB" id="P00445"/>
    </source>
</evidence>
<evidence type="ECO:0000250" key="3">
    <source>
        <dbReference type="UniProtKB" id="P85978"/>
    </source>
</evidence>
<evidence type="ECO:0000305" key="4"/>
<name>SODC1_DEBHA</name>
<accession>O42724</accession>
<accession>Q6BHL1</accession>
<organism>
    <name type="scientific">Debaryomyces hansenii (strain ATCC 36239 / CBS 767 / BCRC 21394 / JCM 1990 / NBRC 0083 / IGC 2968)</name>
    <name type="common">Yeast</name>
    <name type="synonym">Torulaspora hansenii</name>
    <dbReference type="NCBI Taxonomy" id="284592"/>
    <lineage>
        <taxon>Eukaryota</taxon>
        <taxon>Fungi</taxon>
        <taxon>Dikarya</taxon>
        <taxon>Ascomycota</taxon>
        <taxon>Saccharomycotina</taxon>
        <taxon>Pichiomycetes</taxon>
        <taxon>Debaryomycetaceae</taxon>
        <taxon>Debaryomyces</taxon>
    </lineage>
</organism>
<keyword id="KW-0049">Antioxidant</keyword>
<keyword id="KW-0186">Copper</keyword>
<keyword id="KW-0963">Cytoplasm</keyword>
<keyword id="KW-0903">Direct protein sequencing</keyword>
<keyword id="KW-1015">Disulfide bond</keyword>
<keyword id="KW-0479">Metal-binding</keyword>
<keyword id="KW-0560">Oxidoreductase</keyword>
<keyword id="KW-1185">Reference proteome</keyword>
<keyword id="KW-0862">Zinc</keyword>
<gene>
    <name type="primary">SOD1</name>
    <name type="ordered locus">DEHA2G17732g</name>
</gene>